<accession>Q12622</accession>
<feature type="signal peptide" evidence="1">
    <location>
        <begin position="1"/>
        <end position="20"/>
    </location>
</feature>
<feature type="chain" id="PRO_0000007916" description="Endoglucanase EG-1">
    <location>
        <begin position="21"/>
        <end position="435"/>
    </location>
</feature>
<feature type="active site" description="Nucleophile" evidence="1">
    <location>
        <position position="217"/>
    </location>
</feature>
<feature type="active site" description="Proton donor" evidence="1">
    <location>
        <position position="222"/>
    </location>
</feature>
<feature type="modified residue" description="Pyrrolidone carboxylic acid" evidence="1">
    <location>
        <position position="21"/>
    </location>
</feature>
<feature type="glycosylation site" description="N-linked (GlcNAc...) asparagine" evidence="1">
    <location>
        <position position="109"/>
    </location>
</feature>
<feature type="glycosylation site" description="N-linked (GlcNAc...) asparagine" evidence="1">
    <location>
        <position position="267"/>
    </location>
</feature>
<feature type="disulfide bond" evidence="1">
    <location>
        <begin position="38"/>
        <end position="44"/>
    </location>
</feature>
<feature type="disulfide bond" evidence="1">
    <location>
        <begin position="71"/>
        <end position="93"/>
    </location>
</feature>
<feature type="disulfide bond" evidence="1">
    <location>
        <begin position="83"/>
        <end position="89"/>
    </location>
</feature>
<feature type="disulfide bond" evidence="1">
    <location>
        <begin position="160"/>
        <end position="385"/>
    </location>
</feature>
<feature type="disulfide bond" evidence="1">
    <location>
        <begin position="192"/>
        <end position="215"/>
    </location>
</feature>
<feature type="disulfide bond" evidence="1">
    <location>
        <begin position="196"/>
        <end position="214"/>
    </location>
</feature>
<feature type="disulfide bond" evidence="1">
    <location>
        <begin position="235"/>
        <end position="254"/>
    </location>
</feature>
<feature type="disulfide bond" evidence="1">
    <location>
        <begin position="243"/>
        <end position="248"/>
    </location>
</feature>
<feature type="disulfide bond" evidence="1">
    <location>
        <begin position="259"/>
        <end position="335"/>
    </location>
</feature>
<sequence length="435" mass="47890">MARGTALLGLTSLLLGLVNGQKPGETKEVHPQLTTFRCTKKGGCKPATNYIVLDSLSHPIHRAEGLGWGNCGDWGNPPPKDVCPDVESCAKNCIMEGIPDYSQYGVTTNGTSLRLQHILPDGRVPSPRVYLLDKTERRYEMLHLTGFEFTFDVDATKLPCGMNSALYLSEMHPTGAKSKHNPGGAYYGTGYCDAQCFVTPFINGLGNIEGKGSCCNEMDIWEANSRASHVAPHVCNKKGLYLCEGEECAFEGVCDKNGCGWNPYRVNVTDYYGRGEEFKVNTLKPFTVVTQFLANRKGKLEKIHRFYVQDGKIIESFYTNKEGIPYTNMIEDEFCAATGSRKYMELGATQGMGEALTRGMVLAMSIWWDQGGNMEWLDHGEAGPCAKGEGAPSNVVQVEPFPEVTYTNLRWGEIGSTYQEVQKPKPKPGPGPRSD</sequence>
<reference key="1">
    <citation type="submission" date="1995-08" db="EMBL/GenBank/DDBJ databases">
        <authorList>
            <person name="Takashima S."/>
            <person name="Nakamura A."/>
            <person name="Hidaka M."/>
            <person name="Masaki H."/>
            <person name="Uozumi T."/>
        </authorList>
    </citation>
    <scope>NUCLEOTIDE SEQUENCE [GENOMIC DNA]</scope>
    <source>
        <strain>IFO 9854</strain>
    </source>
</reference>
<organism>
    <name type="scientific">Humicola insolens</name>
    <name type="common">Soft-rot fungus</name>
    <dbReference type="NCBI Taxonomy" id="85995"/>
    <lineage>
        <taxon>Eukaryota</taxon>
        <taxon>Fungi</taxon>
        <taxon>Dikarya</taxon>
        <taxon>Ascomycota</taxon>
        <taxon>Pezizomycotina</taxon>
        <taxon>Sordariomycetes</taxon>
        <taxon>Sordariomycetidae</taxon>
        <taxon>Sordariales</taxon>
        <taxon>Chaetomiaceae</taxon>
        <taxon>Mycothermus</taxon>
    </lineage>
</organism>
<comment type="function">
    <text>The biological conversion of cellulose to glucose generally requires three types of hydrolytic enzymes: (1) Endoglucanases which cut internal beta-1,4-glucosidic bonds; (2) Exocellobiohydrolases that cut the disaccharide cellobiose from the non-reducing end of the cellulose polymer chain; (3) Beta-1,4-glucosidases which hydrolyze the cellobiose and other short cello-oligosaccharides to glucose.</text>
</comment>
<comment type="catalytic activity">
    <reaction>
        <text>Endohydrolysis of (1-&gt;4)-beta-D-glucosidic linkages in cellulose, lichenin and cereal beta-D-glucans.</text>
        <dbReference type="EC" id="3.2.1.4"/>
    </reaction>
</comment>
<comment type="subcellular location">
    <subcellularLocation>
        <location>Secreted</location>
    </subcellularLocation>
</comment>
<comment type="similarity">
    <text evidence="2">Belongs to the glycosyl hydrolase 7 (cellulase C) family.</text>
</comment>
<keyword id="KW-0119">Carbohydrate metabolism</keyword>
<keyword id="KW-0136">Cellulose degradation</keyword>
<keyword id="KW-1015">Disulfide bond</keyword>
<keyword id="KW-0325">Glycoprotein</keyword>
<keyword id="KW-0326">Glycosidase</keyword>
<keyword id="KW-0378">Hydrolase</keyword>
<keyword id="KW-0624">Polysaccharide degradation</keyword>
<keyword id="KW-0873">Pyrrolidone carboxylic acid</keyword>
<keyword id="KW-0964">Secreted</keyword>
<keyword id="KW-0732">Signal</keyword>
<evidence type="ECO:0000250" key="1"/>
<evidence type="ECO:0000305" key="2"/>
<name>GUN1B_HUMIN</name>
<dbReference type="EC" id="3.2.1.4"/>
<dbReference type="EMBL" id="D63516">
    <property type="protein sequence ID" value="BAA09786.1"/>
    <property type="molecule type" value="Genomic_DNA"/>
</dbReference>
<dbReference type="SMR" id="Q12622"/>
<dbReference type="CAZy" id="GH7">
    <property type="family name" value="Glycoside Hydrolase Family 7"/>
</dbReference>
<dbReference type="GlyCosmos" id="Q12622">
    <property type="glycosylation" value="2 sites, No reported glycans"/>
</dbReference>
<dbReference type="GO" id="GO:0005576">
    <property type="term" value="C:extracellular region"/>
    <property type="evidence" value="ECO:0007669"/>
    <property type="project" value="UniProtKB-SubCell"/>
</dbReference>
<dbReference type="GO" id="GO:0008810">
    <property type="term" value="F:cellulase activity"/>
    <property type="evidence" value="ECO:0007669"/>
    <property type="project" value="UniProtKB-EC"/>
</dbReference>
<dbReference type="GO" id="GO:0030245">
    <property type="term" value="P:cellulose catabolic process"/>
    <property type="evidence" value="ECO:0007669"/>
    <property type="project" value="UniProtKB-KW"/>
</dbReference>
<dbReference type="CDD" id="cd07999">
    <property type="entry name" value="GH7_CBH_EG"/>
    <property type="match status" value="1"/>
</dbReference>
<dbReference type="Gene3D" id="2.70.100.10">
    <property type="entry name" value="Glycoside hydrolase, family 7, domain"/>
    <property type="match status" value="1"/>
</dbReference>
<dbReference type="InterPro" id="IPR013320">
    <property type="entry name" value="ConA-like_dom_sf"/>
</dbReference>
<dbReference type="InterPro" id="IPR001722">
    <property type="entry name" value="Glyco_hydro_7"/>
</dbReference>
<dbReference type="InterPro" id="IPR037019">
    <property type="entry name" value="Glyco_hydro_7_sf"/>
</dbReference>
<dbReference type="PANTHER" id="PTHR33753">
    <property type="entry name" value="1,4-BETA-D-GLUCAN CELLOBIOHYDROLASE B"/>
    <property type="match status" value="1"/>
</dbReference>
<dbReference type="PANTHER" id="PTHR33753:SF1">
    <property type="entry name" value="ENDO-BETA-1,4-GLUCANASE CELB"/>
    <property type="match status" value="1"/>
</dbReference>
<dbReference type="Pfam" id="PF00840">
    <property type="entry name" value="Glyco_hydro_7"/>
    <property type="match status" value="1"/>
</dbReference>
<dbReference type="PRINTS" id="PR00734">
    <property type="entry name" value="GLHYDRLASE7"/>
</dbReference>
<dbReference type="SUPFAM" id="SSF49899">
    <property type="entry name" value="Concanavalin A-like lectins/glucanases"/>
    <property type="match status" value="1"/>
</dbReference>
<protein>
    <recommendedName>
        <fullName>Endoglucanase EG-1</fullName>
        <ecNumber>3.2.1.4</ecNumber>
    </recommendedName>
    <alternativeName>
        <fullName>Cellulase</fullName>
    </alternativeName>
    <alternativeName>
        <fullName>Endo-1,4-beta-glucanase</fullName>
    </alternativeName>
</protein>
<proteinExistence type="inferred from homology"/>
<gene>
    <name type="primary">EG-1</name>
</gene>